<name>LPXK_ACISJ</name>
<evidence type="ECO:0000255" key="1">
    <source>
        <dbReference type="HAMAP-Rule" id="MF_00409"/>
    </source>
</evidence>
<accession>A1W892</accession>
<feature type="chain" id="PRO_0000340818" description="Tetraacyldisaccharide 4'-kinase">
    <location>
        <begin position="1"/>
        <end position="338"/>
    </location>
</feature>
<feature type="binding site" evidence="1">
    <location>
        <begin position="67"/>
        <end position="74"/>
    </location>
    <ligand>
        <name>ATP</name>
        <dbReference type="ChEBI" id="CHEBI:30616"/>
    </ligand>
</feature>
<proteinExistence type="inferred from homology"/>
<organism>
    <name type="scientific">Acidovorax sp. (strain JS42)</name>
    <dbReference type="NCBI Taxonomy" id="232721"/>
    <lineage>
        <taxon>Bacteria</taxon>
        <taxon>Pseudomonadati</taxon>
        <taxon>Pseudomonadota</taxon>
        <taxon>Betaproteobacteria</taxon>
        <taxon>Burkholderiales</taxon>
        <taxon>Comamonadaceae</taxon>
        <taxon>Acidovorax</taxon>
    </lineage>
</organism>
<protein>
    <recommendedName>
        <fullName evidence="1">Tetraacyldisaccharide 4'-kinase</fullName>
        <ecNumber evidence="1">2.7.1.130</ecNumber>
    </recommendedName>
    <alternativeName>
        <fullName evidence="1">Lipid A 4'-kinase</fullName>
    </alternativeName>
</protein>
<keyword id="KW-0067">ATP-binding</keyword>
<keyword id="KW-0418">Kinase</keyword>
<keyword id="KW-0441">Lipid A biosynthesis</keyword>
<keyword id="KW-0444">Lipid biosynthesis</keyword>
<keyword id="KW-0443">Lipid metabolism</keyword>
<keyword id="KW-0547">Nucleotide-binding</keyword>
<keyword id="KW-0808">Transferase</keyword>
<reference key="1">
    <citation type="submission" date="2006-12" db="EMBL/GenBank/DDBJ databases">
        <title>Complete sequence of chromosome 1 of Acidovorax sp. JS42.</title>
        <authorList>
            <person name="Copeland A."/>
            <person name="Lucas S."/>
            <person name="Lapidus A."/>
            <person name="Barry K."/>
            <person name="Detter J.C."/>
            <person name="Glavina del Rio T."/>
            <person name="Dalin E."/>
            <person name="Tice H."/>
            <person name="Pitluck S."/>
            <person name="Chertkov O."/>
            <person name="Brettin T."/>
            <person name="Bruce D."/>
            <person name="Han C."/>
            <person name="Tapia R."/>
            <person name="Gilna P."/>
            <person name="Schmutz J."/>
            <person name="Larimer F."/>
            <person name="Land M."/>
            <person name="Hauser L."/>
            <person name="Kyrpides N."/>
            <person name="Kim E."/>
            <person name="Stahl D."/>
            <person name="Richardson P."/>
        </authorList>
    </citation>
    <scope>NUCLEOTIDE SEQUENCE [LARGE SCALE GENOMIC DNA]</scope>
    <source>
        <strain>JS42</strain>
    </source>
</reference>
<dbReference type="EC" id="2.7.1.130" evidence="1"/>
<dbReference type="EMBL" id="CP000539">
    <property type="protein sequence ID" value="ABM42467.1"/>
    <property type="molecule type" value="Genomic_DNA"/>
</dbReference>
<dbReference type="SMR" id="A1W892"/>
<dbReference type="STRING" id="232721.Ajs_2305"/>
<dbReference type="KEGG" id="ajs:Ajs_2305"/>
<dbReference type="eggNOG" id="COG1663">
    <property type="taxonomic scope" value="Bacteria"/>
</dbReference>
<dbReference type="HOGENOM" id="CLU_038816_2_0_4"/>
<dbReference type="UniPathway" id="UPA00359">
    <property type="reaction ID" value="UER00482"/>
</dbReference>
<dbReference type="Proteomes" id="UP000000645">
    <property type="component" value="Chromosome"/>
</dbReference>
<dbReference type="GO" id="GO:0005886">
    <property type="term" value="C:plasma membrane"/>
    <property type="evidence" value="ECO:0007669"/>
    <property type="project" value="TreeGrafter"/>
</dbReference>
<dbReference type="GO" id="GO:0005524">
    <property type="term" value="F:ATP binding"/>
    <property type="evidence" value="ECO:0007669"/>
    <property type="project" value="UniProtKB-UniRule"/>
</dbReference>
<dbReference type="GO" id="GO:0009029">
    <property type="term" value="F:tetraacyldisaccharide 4'-kinase activity"/>
    <property type="evidence" value="ECO:0007669"/>
    <property type="project" value="UniProtKB-UniRule"/>
</dbReference>
<dbReference type="GO" id="GO:0009245">
    <property type="term" value="P:lipid A biosynthetic process"/>
    <property type="evidence" value="ECO:0007669"/>
    <property type="project" value="UniProtKB-UniRule"/>
</dbReference>
<dbReference type="GO" id="GO:0009244">
    <property type="term" value="P:lipopolysaccharide core region biosynthetic process"/>
    <property type="evidence" value="ECO:0007669"/>
    <property type="project" value="TreeGrafter"/>
</dbReference>
<dbReference type="HAMAP" id="MF_00409">
    <property type="entry name" value="LpxK"/>
    <property type="match status" value="1"/>
</dbReference>
<dbReference type="InterPro" id="IPR003758">
    <property type="entry name" value="LpxK"/>
</dbReference>
<dbReference type="InterPro" id="IPR027417">
    <property type="entry name" value="P-loop_NTPase"/>
</dbReference>
<dbReference type="NCBIfam" id="TIGR00682">
    <property type="entry name" value="lpxK"/>
    <property type="match status" value="1"/>
</dbReference>
<dbReference type="PANTHER" id="PTHR42724">
    <property type="entry name" value="TETRAACYLDISACCHARIDE 4'-KINASE"/>
    <property type="match status" value="1"/>
</dbReference>
<dbReference type="PANTHER" id="PTHR42724:SF1">
    <property type="entry name" value="TETRAACYLDISACCHARIDE 4'-KINASE, MITOCHONDRIAL-RELATED"/>
    <property type="match status" value="1"/>
</dbReference>
<dbReference type="Pfam" id="PF02606">
    <property type="entry name" value="LpxK"/>
    <property type="match status" value="1"/>
</dbReference>
<dbReference type="SUPFAM" id="SSF52540">
    <property type="entry name" value="P-loop containing nucleoside triphosphate hydrolases"/>
    <property type="match status" value="1"/>
</dbReference>
<comment type="function">
    <text evidence="1">Transfers the gamma-phosphate of ATP to the 4'-position of a tetraacyldisaccharide 1-phosphate intermediate (termed DS-1-P) to form tetraacyldisaccharide 1,4'-bis-phosphate (lipid IVA).</text>
</comment>
<comment type="catalytic activity">
    <reaction evidence="1">
        <text>a lipid A disaccharide + ATP = a lipid IVA + ADP + H(+)</text>
        <dbReference type="Rhea" id="RHEA:67840"/>
        <dbReference type="ChEBI" id="CHEBI:15378"/>
        <dbReference type="ChEBI" id="CHEBI:30616"/>
        <dbReference type="ChEBI" id="CHEBI:176343"/>
        <dbReference type="ChEBI" id="CHEBI:176425"/>
        <dbReference type="ChEBI" id="CHEBI:456216"/>
        <dbReference type="EC" id="2.7.1.130"/>
    </reaction>
</comment>
<comment type="pathway">
    <text evidence="1">Glycolipid biosynthesis; lipid IV(A) biosynthesis; lipid IV(A) from (3R)-3-hydroxytetradecanoyl-[acyl-carrier-protein] and UDP-N-acetyl-alpha-D-glucosamine: step 6/6.</text>
</comment>
<comment type="similarity">
    <text evidence="1">Belongs to the LpxK family.</text>
</comment>
<gene>
    <name evidence="1" type="primary">lpxK</name>
    <name type="ordered locus">Ajs_2305</name>
</gene>
<sequence>MAAPGRPSPLAERLRGAWQHRGALALALWPLSLLYGVLTALRRALYRTGLLRSERLPVPVIVVGNVIAGGAGKTPVTLAVVRHLQARGWRPGVISRGYGRATADCREVLPASSAAEVGDEPLLIARASGAPVFVARRRAQAGRALLAAHPATNILVCDDGLQHLALARDLEVCVFNDEGAGNGWLLPAGPLREPWPRAVDLVLHAGSPPGGGAPQFALSRELAAHAVNASGQHLPLEQLQGEPLHALAAIARPHDFFAMLHARGLQPESEEALPDHYDFSSWKRPPDKRLRLICTEKDAVKLWPAHPDALAVPLALRIPPAFFDTLDARLASLSSSGH</sequence>